<feature type="chain" id="PRO_1000004881" description="Peptide chain release factor 1">
    <location>
        <begin position="1"/>
        <end position="358"/>
    </location>
</feature>
<feature type="modified residue" description="N5-methylglutamine" evidence="1">
    <location>
        <position position="233"/>
    </location>
</feature>
<keyword id="KW-0963">Cytoplasm</keyword>
<keyword id="KW-0488">Methylation</keyword>
<keyword id="KW-0648">Protein biosynthesis</keyword>
<keyword id="KW-1185">Reference proteome</keyword>
<dbReference type="EMBL" id="CP000727">
    <property type="protein sequence ID" value="ABS38116.1"/>
    <property type="molecule type" value="Genomic_DNA"/>
</dbReference>
<dbReference type="EMBL" id="AM412317">
    <property type="protein sequence ID" value="CAL81694.1"/>
    <property type="molecule type" value="Genomic_DNA"/>
</dbReference>
<dbReference type="RefSeq" id="YP_001252686.1">
    <property type="nucleotide sequence ID" value="NC_009495.1"/>
</dbReference>
<dbReference type="RefSeq" id="YP_001386098.1">
    <property type="nucleotide sequence ID" value="NC_009698.1"/>
</dbReference>
<dbReference type="SMR" id="A5HY35"/>
<dbReference type="KEGG" id="cbh:CLC_0187"/>
<dbReference type="KEGG" id="cbo:CBO0139"/>
<dbReference type="PATRIC" id="fig|413999.7.peg.138"/>
<dbReference type="HOGENOM" id="CLU_036856_0_1_9"/>
<dbReference type="PRO" id="PR:A5HY35"/>
<dbReference type="Proteomes" id="UP000001986">
    <property type="component" value="Chromosome"/>
</dbReference>
<dbReference type="GO" id="GO:0005737">
    <property type="term" value="C:cytoplasm"/>
    <property type="evidence" value="ECO:0007669"/>
    <property type="project" value="UniProtKB-SubCell"/>
</dbReference>
<dbReference type="GO" id="GO:0016149">
    <property type="term" value="F:translation release factor activity, codon specific"/>
    <property type="evidence" value="ECO:0007669"/>
    <property type="project" value="UniProtKB-UniRule"/>
</dbReference>
<dbReference type="FunFam" id="3.30.160.20:FF:000004">
    <property type="entry name" value="Peptide chain release factor 1"/>
    <property type="match status" value="1"/>
</dbReference>
<dbReference type="FunFam" id="3.30.70.1660:FF:000002">
    <property type="entry name" value="Peptide chain release factor 1"/>
    <property type="match status" value="1"/>
</dbReference>
<dbReference type="FunFam" id="3.30.70.1660:FF:000004">
    <property type="entry name" value="Peptide chain release factor 1"/>
    <property type="match status" value="1"/>
</dbReference>
<dbReference type="Gene3D" id="3.30.160.20">
    <property type="match status" value="1"/>
</dbReference>
<dbReference type="Gene3D" id="3.30.70.1660">
    <property type="match status" value="1"/>
</dbReference>
<dbReference type="Gene3D" id="6.10.140.1950">
    <property type="match status" value="1"/>
</dbReference>
<dbReference type="HAMAP" id="MF_00093">
    <property type="entry name" value="Rel_fac_1"/>
    <property type="match status" value="1"/>
</dbReference>
<dbReference type="InterPro" id="IPR005139">
    <property type="entry name" value="PCRF"/>
</dbReference>
<dbReference type="InterPro" id="IPR000352">
    <property type="entry name" value="Pep_chain_release_fac_I"/>
</dbReference>
<dbReference type="InterPro" id="IPR045853">
    <property type="entry name" value="Pep_chain_release_fac_I_sf"/>
</dbReference>
<dbReference type="InterPro" id="IPR050057">
    <property type="entry name" value="Prokaryotic/Mito_RF"/>
</dbReference>
<dbReference type="InterPro" id="IPR004373">
    <property type="entry name" value="RF-1"/>
</dbReference>
<dbReference type="NCBIfam" id="TIGR00019">
    <property type="entry name" value="prfA"/>
    <property type="match status" value="1"/>
</dbReference>
<dbReference type="NCBIfam" id="NF001859">
    <property type="entry name" value="PRK00591.1"/>
    <property type="match status" value="1"/>
</dbReference>
<dbReference type="PANTHER" id="PTHR43804">
    <property type="entry name" value="LD18447P"/>
    <property type="match status" value="1"/>
</dbReference>
<dbReference type="PANTHER" id="PTHR43804:SF7">
    <property type="entry name" value="LD18447P"/>
    <property type="match status" value="1"/>
</dbReference>
<dbReference type="Pfam" id="PF03462">
    <property type="entry name" value="PCRF"/>
    <property type="match status" value="1"/>
</dbReference>
<dbReference type="Pfam" id="PF00472">
    <property type="entry name" value="RF-1"/>
    <property type="match status" value="1"/>
</dbReference>
<dbReference type="SMART" id="SM00937">
    <property type="entry name" value="PCRF"/>
    <property type="match status" value="1"/>
</dbReference>
<dbReference type="SUPFAM" id="SSF75620">
    <property type="entry name" value="Release factor"/>
    <property type="match status" value="1"/>
</dbReference>
<dbReference type="PROSITE" id="PS00745">
    <property type="entry name" value="RF_PROK_I"/>
    <property type="match status" value="1"/>
</dbReference>
<protein>
    <recommendedName>
        <fullName evidence="1">Peptide chain release factor 1</fullName>
        <shortName evidence="1">RF-1</shortName>
    </recommendedName>
</protein>
<name>RF1_CLOBH</name>
<comment type="function">
    <text evidence="1">Peptide chain release factor 1 directs the termination of translation in response to the peptide chain termination codons UAG and UAA.</text>
</comment>
<comment type="subcellular location">
    <subcellularLocation>
        <location evidence="1">Cytoplasm</location>
    </subcellularLocation>
</comment>
<comment type="PTM">
    <text evidence="1">Methylated by PrmC. Methylation increases the termination efficiency of RF1.</text>
</comment>
<comment type="similarity">
    <text evidence="1">Belongs to the prokaryotic/mitochondrial release factor family.</text>
</comment>
<reference key="1">
    <citation type="journal article" date="2007" name="Genome Res.">
        <title>Genome sequence of a proteolytic (Group I) Clostridium botulinum strain Hall A and comparative analysis of the clostridial genomes.</title>
        <authorList>
            <person name="Sebaihia M."/>
            <person name="Peck M.W."/>
            <person name="Minton N.P."/>
            <person name="Thomson N.R."/>
            <person name="Holden M.T.G."/>
            <person name="Mitchell W.J."/>
            <person name="Carter A.T."/>
            <person name="Bentley S.D."/>
            <person name="Mason D.R."/>
            <person name="Crossman L."/>
            <person name="Paul C.J."/>
            <person name="Ivens A."/>
            <person name="Wells-Bennik M.H.J."/>
            <person name="Davis I.J."/>
            <person name="Cerdeno-Tarraga A.M."/>
            <person name="Churcher C."/>
            <person name="Quail M.A."/>
            <person name="Chillingworth T."/>
            <person name="Feltwell T."/>
            <person name="Fraser A."/>
            <person name="Goodhead I."/>
            <person name="Hance Z."/>
            <person name="Jagels K."/>
            <person name="Larke N."/>
            <person name="Maddison M."/>
            <person name="Moule S."/>
            <person name="Mungall K."/>
            <person name="Norbertczak H."/>
            <person name="Rabbinowitsch E."/>
            <person name="Sanders M."/>
            <person name="Simmonds M."/>
            <person name="White B."/>
            <person name="Whithead S."/>
            <person name="Parkhill J."/>
        </authorList>
    </citation>
    <scope>NUCLEOTIDE SEQUENCE [LARGE SCALE GENOMIC DNA]</scope>
    <source>
        <strain>Hall / ATCC 3502 / NCTC 13319 / Type A</strain>
    </source>
</reference>
<reference key="2">
    <citation type="journal article" date="2007" name="PLoS ONE">
        <title>Analysis of the neurotoxin complex genes in Clostridium botulinum A1-A4 and B1 strains: BoNT/A3, /Ba4 and /B1 clusters are located within plasmids.</title>
        <authorList>
            <person name="Smith T.J."/>
            <person name="Hill K.K."/>
            <person name="Foley B.T."/>
            <person name="Detter J.C."/>
            <person name="Munk A.C."/>
            <person name="Bruce D.C."/>
            <person name="Doggett N.A."/>
            <person name="Smith L.A."/>
            <person name="Marks J.D."/>
            <person name="Xie G."/>
            <person name="Brettin T.S."/>
        </authorList>
    </citation>
    <scope>NUCLEOTIDE SEQUENCE [LARGE SCALE GENOMIC DNA]</scope>
    <source>
        <strain>Hall / ATCC 3502 / NCTC 13319 / Type A</strain>
    </source>
</reference>
<proteinExistence type="inferred from homology"/>
<accession>A5HY35</accession>
<accession>A7G055</accession>
<organism>
    <name type="scientific">Clostridium botulinum (strain Hall / ATCC 3502 / NCTC 13319 / Type A)</name>
    <dbReference type="NCBI Taxonomy" id="441771"/>
    <lineage>
        <taxon>Bacteria</taxon>
        <taxon>Bacillati</taxon>
        <taxon>Bacillota</taxon>
        <taxon>Clostridia</taxon>
        <taxon>Eubacteriales</taxon>
        <taxon>Clostridiaceae</taxon>
        <taxon>Clostridium</taxon>
    </lineage>
</organism>
<sequence length="358" mass="40599">MLERLNFIENKYEELSNKISDPSVMANQKEWQKLCKEHADLEIIVNTYREYKKAQEDLESDKEMLKEESDKELREMAQEEIKELTLKLEDLERELTILLLPKDPNDDKDVFIEIRAGAGGEEAALFASNLLRMYTRYAERKNWKVETISLNATDIGGFKEVTVAVKGKGAYSRLKYESGVHRVQRVPDTESSGRIHTSTATVAVLPEVDDVDININANDLRIDVYRASGHGGQCVNTTDSAVRITHLPTGLVVTCQDEKSQLKNKEKAMKVLKARLFEAAEAERAASIAEDRKSQVGTGDRSERIRTYNYPQGRITDHRIGLTLYKLETFLDGDIDEAIEALVTEDQAEKMKDLGRVN</sequence>
<gene>
    <name evidence="1" type="primary">prfA</name>
    <name type="ordered locus">CBO0139</name>
    <name type="ordered locus">CLC_0187</name>
</gene>
<evidence type="ECO:0000255" key="1">
    <source>
        <dbReference type="HAMAP-Rule" id="MF_00093"/>
    </source>
</evidence>